<organism>
    <name type="scientific">Gibberella zeae (strain ATCC MYA-4620 / CBS 123657 / FGSC 9075 / NRRL 31084 / PH-1)</name>
    <name type="common">Wheat head blight fungus</name>
    <name type="synonym">Fusarium graminearum</name>
    <dbReference type="NCBI Taxonomy" id="229533"/>
    <lineage>
        <taxon>Eukaryota</taxon>
        <taxon>Fungi</taxon>
        <taxon>Dikarya</taxon>
        <taxon>Ascomycota</taxon>
        <taxon>Pezizomycotina</taxon>
        <taxon>Sordariomycetes</taxon>
        <taxon>Hypocreomycetidae</taxon>
        <taxon>Hypocreales</taxon>
        <taxon>Nectriaceae</taxon>
        <taxon>Fusarium</taxon>
    </lineage>
</organism>
<protein>
    <recommendedName>
        <fullName>Mitochondrial import inner membrane translocase subunit TIM16</fullName>
    </recommendedName>
    <alternativeName>
        <fullName>Presequence translocated-associated motor subunit PAM16</fullName>
    </alternativeName>
</protein>
<dbReference type="EMBL" id="DS231667">
    <property type="protein sequence ID" value="ESU15031.1"/>
    <property type="molecule type" value="Genomic_DNA"/>
</dbReference>
<dbReference type="EMBL" id="HG970333">
    <property type="protein sequence ID" value="SCB65585.1"/>
    <property type="molecule type" value="Genomic_DNA"/>
</dbReference>
<dbReference type="RefSeq" id="XP_011320456.1">
    <property type="nucleotide sequence ID" value="XM_011322154.1"/>
</dbReference>
<dbReference type="SMR" id="Q4I375"/>
<dbReference type="FunCoup" id="Q4I375">
    <property type="interactions" value="249"/>
</dbReference>
<dbReference type="STRING" id="229533.Q4I375"/>
<dbReference type="GeneID" id="23555345"/>
<dbReference type="KEGG" id="fgr:FGSG_08333"/>
<dbReference type="VEuPathDB" id="FungiDB:FGRAMPH1_01G09683"/>
<dbReference type="eggNOG" id="KOG3442">
    <property type="taxonomic scope" value="Eukaryota"/>
</dbReference>
<dbReference type="HOGENOM" id="CLU_101461_0_1_1"/>
<dbReference type="InParanoid" id="Q4I375"/>
<dbReference type="OrthoDB" id="110690at110618"/>
<dbReference type="Proteomes" id="UP000070720">
    <property type="component" value="Chromosome 2"/>
</dbReference>
<dbReference type="GO" id="GO:0005744">
    <property type="term" value="C:TIM23 mitochondrial import inner membrane translocase complex"/>
    <property type="evidence" value="ECO:0007669"/>
    <property type="project" value="InterPro"/>
</dbReference>
<dbReference type="GO" id="GO:0030150">
    <property type="term" value="P:protein import into mitochondrial matrix"/>
    <property type="evidence" value="ECO:0007669"/>
    <property type="project" value="InterPro"/>
</dbReference>
<dbReference type="FunFam" id="1.10.287.110:FF:000006">
    <property type="entry name" value="Import inner membrane translocase subunit TIM16"/>
    <property type="match status" value="1"/>
</dbReference>
<dbReference type="Gene3D" id="1.10.287.110">
    <property type="entry name" value="DnaJ domain"/>
    <property type="match status" value="1"/>
</dbReference>
<dbReference type="InterPro" id="IPR036869">
    <property type="entry name" value="J_dom_sf"/>
</dbReference>
<dbReference type="InterPro" id="IPR005341">
    <property type="entry name" value="Tim16"/>
</dbReference>
<dbReference type="PANTHER" id="PTHR12388">
    <property type="entry name" value="MITOCHONDRIA ASSOCIATED GRANULOCYTE MACROPHAGE CSF SIGNALING MOLECULE"/>
    <property type="match status" value="1"/>
</dbReference>
<dbReference type="PANTHER" id="PTHR12388:SF0">
    <property type="entry name" value="MITOCHONDRIAL IMPORT INNER MEMBRANE TRANSLOCASE SUBUNIT TIM16"/>
    <property type="match status" value="1"/>
</dbReference>
<dbReference type="Pfam" id="PF03656">
    <property type="entry name" value="Pam16"/>
    <property type="match status" value="1"/>
</dbReference>
<reference key="1">
    <citation type="journal article" date="2007" name="Science">
        <title>The Fusarium graminearum genome reveals a link between localized polymorphism and pathogen specialization.</title>
        <authorList>
            <person name="Cuomo C.A."/>
            <person name="Gueldener U."/>
            <person name="Xu J.-R."/>
            <person name="Trail F."/>
            <person name="Turgeon B.G."/>
            <person name="Di Pietro A."/>
            <person name="Walton J.D."/>
            <person name="Ma L.-J."/>
            <person name="Baker S.E."/>
            <person name="Rep M."/>
            <person name="Adam G."/>
            <person name="Antoniw J."/>
            <person name="Baldwin T."/>
            <person name="Calvo S.E."/>
            <person name="Chang Y.-L."/>
            <person name="DeCaprio D."/>
            <person name="Gale L.R."/>
            <person name="Gnerre S."/>
            <person name="Goswami R.S."/>
            <person name="Hammond-Kosack K."/>
            <person name="Harris L.J."/>
            <person name="Hilburn K."/>
            <person name="Kennell J.C."/>
            <person name="Kroken S."/>
            <person name="Magnuson J.K."/>
            <person name="Mannhaupt G."/>
            <person name="Mauceli E.W."/>
            <person name="Mewes H.-W."/>
            <person name="Mitterbauer R."/>
            <person name="Muehlbauer G."/>
            <person name="Muensterkoetter M."/>
            <person name="Nelson D."/>
            <person name="O'Donnell K."/>
            <person name="Ouellet T."/>
            <person name="Qi W."/>
            <person name="Quesneville H."/>
            <person name="Roncero M.I.G."/>
            <person name="Seong K.-Y."/>
            <person name="Tetko I.V."/>
            <person name="Urban M."/>
            <person name="Waalwijk C."/>
            <person name="Ward T.J."/>
            <person name="Yao J."/>
            <person name="Birren B.W."/>
            <person name="Kistler H.C."/>
        </authorList>
    </citation>
    <scope>NUCLEOTIDE SEQUENCE [LARGE SCALE GENOMIC DNA]</scope>
    <source>
        <strain>ATCC MYA-4620 / CBS 123657 / FGSC 9075 / NRRL 31084 / PH-1</strain>
    </source>
</reference>
<reference key="2">
    <citation type="journal article" date="2010" name="Nature">
        <title>Comparative genomics reveals mobile pathogenicity chromosomes in Fusarium.</title>
        <authorList>
            <person name="Ma L.-J."/>
            <person name="van der Does H.C."/>
            <person name="Borkovich K.A."/>
            <person name="Coleman J.J."/>
            <person name="Daboussi M.-J."/>
            <person name="Di Pietro A."/>
            <person name="Dufresne M."/>
            <person name="Freitag M."/>
            <person name="Grabherr M."/>
            <person name="Henrissat B."/>
            <person name="Houterman P.M."/>
            <person name="Kang S."/>
            <person name="Shim W.-B."/>
            <person name="Woloshuk C."/>
            <person name="Xie X."/>
            <person name="Xu J.-R."/>
            <person name="Antoniw J."/>
            <person name="Baker S.E."/>
            <person name="Bluhm B.H."/>
            <person name="Breakspear A."/>
            <person name="Brown D.W."/>
            <person name="Butchko R.A.E."/>
            <person name="Chapman S."/>
            <person name="Coulson R."/>
            <person name="Coutinho P.M."/>
            <person name="Danchin E.G.J."/>
            <person name="Diener A."/>
            <person name="Gale L.R."/>
            <person name="Gardiner D.M."/>
            <person name="Goff S."/>
            <person name="Hammond-Kosack K.E."/>
            <person name="Hilburn K."/>
            <person name="Hua-Van A."/>
            <person name="Jonkers W."/>
            <person name="Kazan K."/>
            <person name="Kodira C.D."/>
            <person name="Koehrsen M."/>
            <person name="Kumar L."/>
            <person name="Lee Y.-H."/>
            <person name="Li L."/>
            <person name="Manners J.M."/>
            <person name="Miranda-Saavedra D."/>
            <person name="Mukherjee M."/>
            <person name="Park G."/>
            <person name="Park J."/>
            <person name="Park S.-Y."/>
            <person name="Proctor R.H."/>
            <person name="Regev A."/>
            <person name="Ruiz-Roldan M.C."/>
            <person name="Sain D."/>
            <person name="Sakthikumar S."/>
            <person name="Sykes S."/>
            <person name="Schwartz D.C."/>
            <person name="Turgeon B.G."/>
            <person name="Wapinski I."/>
            <person name="Yoder O."/>
            <person name="Young S."/>
            <person name="Zeng Q."/>
            <person name="Zhou S."/>
            <person name="Galagan J."/>
            <person name="Cuomo C.A."/>
            <person name="Kistler H.C."/>
            <person name="Rep M."/>
        </authorList>
    </citation>
    <scope>GENOME REANNOTATION</scope>
    <source>
        <strain>ATCC MYA-4620 / CBS 123657 / FGSC 9075 / NRRL 31084 / PH-1</strain>
    </source>
</reference>
<reference key="3">
    <citation type="journal article" date="2015" name="BMC Genomics">
        <title>The completed genome sequence of the pathogenic ascomycete fungus Fusarium graminearum.</title>
        <authorList>
            <person name="King R."/>
            <person name="Urban M."/>
            <person name="Hammond-Kosack M.C.U."/>
            <person name="Hassani-Pak K."/>
            <person name="Hammond-Kosack K.E."/>
        </authorList>
    </citation>
    <scope>NUCLEOTIDE SEQUENCE [LARGE SCALE GENOMIC DNA]</scope>
    <source>
        <strain>ATCC MYA-4620 / CBS 123657 / FGSC 9075 / NRRL 31084 / PH-1</strain>
    </source>
</reference>
<accession>Q4I375</accession>
<accession>A0A098DCG5</accession>
<accession>A0A0E0RZG9</accession>
<accession>A0A1C3YM27</accession>
<accession>V6RKP0</accession>
<sequence>MAHKFVVTAFLTGSRILGRSFVAAYKQAQAASAYQRAQVKAGNTTGGASLSSGMTLDEACKILNVKPPAGGQANVEEVLSRYKRLFDANDPQKGGSFYLQSKIVRAKERFEREIGPLREKMEAEAEIKEGFKPKVYKD</sequence>
<comment type="function">
    <text evidence="1">Essential component of the PAM complex, a complex required for the translocation of transit peptide-containing proteins from the inner membrane into the mitochondrial matrix in an ATP-dependent manner. In the complex, it is required to regulate activity of mtHSP70 (SSC1) via its interaction with PAM18/TIM14. May act by positioning PAM18/TIM14 in juxtaposition to mtHSP70 at the translocon to maximize ATPase stimulation (By similarity).</text>
</comment>
<comment type="subunit">
    <text evidence="1">Heterodimer with PAM18. Component of the PAM complex, at least composed of mtHsp70, MGE1, TIM44, PAM16, PAM17 and PAM18 (By similarity).</text>
</comment>
<comment type="subcellular location">
    <subcellularLocation>
        <location evidence="1">Mitochondrion inner membrane</location>
        <topology evidence="1">Peripheral membrane protein</topology>
    </subcellularLocation>
</comment>
<comment type="domain">
    <text evidence="1">The J-like region, although related to the J domain does not stimulate ATPase activity of mtHSP70. It nevertheless mediates the heterodimerization with the J domain of PAM18 and is therefore essential for PAM complex function (By similarity).</text>
</comment>
<comment type="similarity">
    <text evidence="2">Belongs to the TIM16/PAM16 family.</text>
</comment>
<name>TIM16_GIBZE</name>
<gene>
    <name type="primary">PAM16</name>
    <name type="synonym">TIM16</name>
    <name type="ORF">FGRAMPH1_01T09683</name>
    <name type="ORF">FGRRES_08333_M</name>
    <name type="ORF">FGSG_08333</name>
</gene>
<evidence type="ECO:0000250" key="1"/>
<evidence type="ECO:0000305" key="2"/>
<proteinExistence type="inferred from homology"/>
<keyword id="KW-0472">Membrane</keyword>
<keyword id="KW-0496">Mitochondrion</keyword>
<keyword id="KW-0999">Mitochondrion inner membrane</keyword>
<keyword id="KW-0653">Protein transport</keyword>
<keyword id="KW-1185">Reference proteome</keyword>
<keyword id="KW-0811">Translocation</keyword>
<keyword id="KW-0813">Transport</keyword>
<feature type="chain" id="PRO_0000214093" description="Mitochondrial import inner membrane translocase subunit TIM16">
    <location>
        <begin position="1"/>
        <end position="138"/>
    </location>
</feature>
<feature type="region of interest" description="J-like">
    <location>
        <begin position="58"/>
        <end position="115"/>
    </location>
</feature>